<dbReference type="EC" id="3.1.-.-" evidence="1"/>
<dbReference type="EMBL" id="CP000259">
    <property type="protein sequence ID" value="ABF31836.1"/>
    <property type="molecule type" value="Genomic_DNA"/>
</dbReference>
<dbReference type="RefSeq" id="WP_011527571.1">
    <property type="nucleotide sequence ID" value="NC_008021.1"/>
</dbReference>
<dbReference type="SMR" id="Q1JMH6"/>
<dbReference type="KEGG" id="spk:MGAS9429_Spy0648"/>
<dbReference type="HOGENOM" id="CLU_007838_1_0_9"/>
<dbReference type="Proteomes" id="UP000002433">
    <property type="component" value="Chromosome"/>
</dbReference>
<dbReference type="GO" id="GO:0008409">
    <property type="term" value="F:5'-3' exonuclease activity"/>
    <property type="evidence" value="ECO:0007669"/>
    <property type="project" value="UniProtKB-UniRule"/>
</dbReference>
<dbReference type="GO" id="GO:0005524">
    <property type="term" value="F:ATP binding"/>
    <property type="evidence" value="ECO:0007669"/>
    <property type="project" value="UniProtKB-UniRule"/>
</dbReference>
<dbReference type="GO" id="GO:0003690">
    <property type="term" value="F:double-stranded DNA binding"/>
    <property type="evidence" value="ECO:0007669"/>
    <property type="project" value="UniProtKB-UniRule"/>
</dbReference>
<dbReference type="GO" id="GO:0004386">
    <property type="term" value="F:helicase activity"/>
    <property type="evidence" value="ECO:0007669"/>
    <property type="project" value="UniProtKB-KW"/>
</dbReference>
<dbReference type="GO" id="GO:0016817">
    <property type="term" value="F:hydrolase activity, acting on acid anhydrides"/>
    <property type="evidence" value="ECO:0007669"/>
    <property type="project" value="InterPro"/>
</dbReference>
<dbReference type="GO" id="GO:0000724">
    <property type="term" value="P:double-strand break repair via homologous recombination"/>
    <property type="evidence" value="ECO:0007669"/>
    <property type="project" value="UniProtKB-UniRule"/>
</dbReference>
<dbReference type="Gene3D" id="3.90.320.10">
    <property type="match status" value="1"/>
</dbReference>
<dbReference type="Gene3D" id="3.40.50.300">
    <property type="entry name" value="P-loop containing nucleotide triphosphate hydrolases"/>
    <property type="match status" value="3"/>
</dbReference>
<dbReference type="HAMAP" id="MF_01453">
    <property type="entry name" value="AddB_type2"/>
    <property type="match status" value="1"/>
</dbReference>
<dbReference type="InterPro" id="IPR049035">
    <property type="entry name" value="ADDB_N"/>
</dbReference>
<dbReference type="InterPro" id="IPR014141">
    <property type="entry name" value="DNA_helicase_suRexB"/>
</dbReference>
<dbReference type="InterPro" id="IPR027417">
    <property type="entry name" value="P-loop_NTPase"/>
</dbReference>
<dbReference type="InterPro" id="IPR011604">
    <property type="entry name" value="PDDEXK-like_dom_sf"/>
</dbReference>
<dbReference type="InterPro" id="IPR038726">
    <property type="entry name" value="PDDEXK_AddAB-type"/>
</dbReference>
<dbReference type="InterPro" id="IPR011335">
    <property type="entry name" value="Restrct_endonuc-II-like"/>
</dbReference>
<dbReference type="NCBIfam" id="TIGR02774">
    <property type="entry name" value="rexB_recomb"/>
    <property type="match status" value="1"/>
</dbReference>
<dbReference type="PANTHER" id="PTHR30591">
    <property type="entry name" value="RECBCD ENZYME SUBUNIT RECC"/>
    <property type="match status" value="1"/>
</dbReference>
<dbReference type="PANTHER" id="PTHR30591:SF1">
    <property type="entry name" value="RECBCD ENZYME SUBUNIT RECC"/>
    <property type="match status" value="1"/>
</dbReference>
<dbReference type="Pfam" id="PF21445">
    <property type="entry name" value="ADDB_N"/>
    <property type="match status" value="1"/>
</dbReference>
<dbReference type="Pfam" id="PF12705">
    <property type="entry name" value="PDDEXK_1"/>
    <property type="match status" value="1"/>
</dbReference>
<dbReference type="SUPFAM" id="SSF52540">
    <property type="entry name" value="P-loop containing nucleoside triphosphate hydrolases"/>
    <property type="match status" value="1"/>
</dbReference>
<dbReference type="SUPFAM" id="SSF52980">
    <property type="entry name" value="Restriction endonuclease-like"/>
    <property type="match status" value="1"/>
</dbReference>
<sequence>MKLIYTEMSYSMTEILVNEARKAADQGYRVFYIAPNSLSFEKEREVLTLLPERGTFSIIVTRFVQMSRYFTVESSPSKQHLDDTTLAMIFYRALMQLKPEDLPSYGRLQNNSVFIEQLVELYKELKNAQLSVHDLTGLDHPQKQEDLIKIIELAETIMIQQDYNQDSPLQSFARAIKLGLLNNQLSKTVIVIDGFSRFSAEEDYLLSLLNNNCQEVIIGSYVSQKAYQKSFIKGNIYEASLHFLQDLAQKYHIKPVFATSNQVFKPAFSRLTQLFEATHDFSQVDWQLQKNDLDHFSLWQCHHQKEEIEHVAKSIRQKLYEGYRYKDILVLLGDMDAYQLQIGPIFDKFEIPYYLGKAEPMAAHPLVQFIESLERSQRYNWRREDILNMLKSGLFGCFDDSDIDRFEEYTQFADIKGFTKFSKPFTINSSRQYPLDFLNEMRQDIVLPLQELFKSQKQLGASLIDKLILFLEKIRLAENMQGLAQSQLEVEKNEEVWKRFTDILTSFHHIFGQEKLRLSDCLALIKTGMKSAQYRVVPATLDVVTIKSYDLVQPHSKPFVYAIGLTQSHFPKQIHHSGLLSDQERARINEIRNYRHFDIASAENSKKNHQTALSLFNAATKELVLSVPTVINETFDDLSPYLKELINFGLPLLDKGKNYLSYDNSDIGNYKALLSQIIAINRQDLIEMSDQDKMFWTVVLRYLRKQLRKQQLELPTSDYRLSTKPLSKEVIEVCFPKGIPLKLSATALTVFYNNQYNYFLKYVLNLNKTESIHPDSRIHGQYLHRVFERLMKDHTQEPFDNKLKQAIYHTNQESFFQQVYQDNAEAEYSLAILEDIVRSTAPILQLNQNIKVIDQEKNFHLDMGNEILVHGIIDRIDQLSDGSLGIVDYKSSANQFDIGTFYNGLSPQLVTYLAALKQIAPHDINQLFGAMYLHLQDPKLDLVTFKQIDNTLVESIYKALTYKGIFSEVEKEHLSTGAYQTKNALYSNDELETLLNYNKYLYLKAAKHIKKGHFLINPYTSDGKTVQGDQLKAITRFEADLDMAQARRLVTLPAKEKKECFLTLMRKESRL</sequence>
<comment type="function">
    <text evidence="1">The heterodimer acts as both an ATP-dependent DNA helicase and an ATP-dependent, dual-direction single-stranded exonuclease. Recognizes the chi site generating a DNA molecule suitable for the initiation of homologous recombination. This subunit has 5' -&gt; 3' nuclease activity but not helicase activity.</text>
</comment>
<comment type="cofactor">
    <cofactor evidence="1">
        <name>Mg(2+)</name>
        <dbReference type="ChEBI" id="CHEBI:18420"/>
    </cofactor>
</comment>
<comment type="subunit">
    <text evidence="1">Heterodimer of AddA and RexB.</text>
</comment>
<comment type="miscellaneous">
    <text evidence="1">Despite having helicase-like domains, this subunit does not have helicase activity.</text>
</comment>
<comment type="similarity">
    <text evidence="1">Belongs to the helicase family. AddB/RexB type 2 subfamily.</text>
</comment>
<name>ADDB_STRPC</name>
<organism>
    <name type="scientific">Streptococcus pyogenes serotype M12 (strain MGAS9429)</name>
    <dbReference type="NCBI Taxonomy" id="370551"/>
    <lineage>
        <taxon>Bacteria</taxon>
        <taxon>Bacillati</taxon>
        <taxon>Bacillota</taxon>
        <taxon>Bacilli</taxon>
        <taxon>Lactobacillales</taxon>
        <taxon>Streptococcaceae</taxon>
        <taxon>Streptococcus</taxon>
    </lineage>
</organism>
<evidence type="ECO:0000255" key="1">
    <source>
        <dbReference type="HAMAP-Rule" id="MF_01453"/>
    </source>
</evidence>
<accession>Q1JMH6</accession>
<feature type="chain" id="PRO_0000379403" description="ATP-dependent helicase/deoxyribonuclease subunit B">
    <location>
        <begin position="1"/>
        <end position="1071"/>
    </location>
</feature>
<gene>
    <name evidence="1" type="primary">rexB</name>
    <name type="ordered locus">MGAS9429_Spy0648</name>
</gene>
<protein>
    <recommendedName>
        <fullName evidence="1">ATP-dependent helicase/deoxyribonuclease subunit B</fullName>
        <ecNumber evidence="1">3.1.-.-</ecNumber>
    </recommendedName>
    <alternativeName>
        <fullName evidence="1">ATP-dependent helicase/nuclease subunit RexB</fullName>
    </alternativeName>
</protein>
<reference key="1">
    <citation type="journal article" date="2006" name="Proc. Natl. Acad. Sci. U.S.A.">
        <title>Molecular genetic anatomy of inter- and intraserotype variation in the human bacterial pathogen group A Streptococcus.</title>
        <authorList>
            <person name="Beres S.B."/>
            <person name="Richter E.W."/>
            <person name="Nagiec M.J."/>
            <person name="Sumby P."/>
            <person name="Porcella S.F."/>
            <person name="DeLeo F.R."/>
            <person name="Musser J.M."/>
        </authorList>
    </citation>
    <scope>NUCLEOTIDE SEQUENCE [LARGE SCALE GENOMIC DNA]</scope>
    <source>
        <strain>MGAS9429</strain>
    </source>
</reference>
<proteinExistence type="inferred from homology"/>
<keyword id="KW-0067">ATP-binding</keyword>
<keyword id="KW-0227">DNA damage</keyword>
<keyword id="KW-0234">DNA repair</keyword>
<keyword id="KW-0238">DNA-binding</keyword>
<keyword id="KW-0269">Exonuclease</keyword>
<keyword id="KW-0347">Helicase</keyword>
<keyword id="KW-0378">Hydrolase</keyword>
<keyword id="KW-0540">Nuclease</keyword>
<keyword id="KW-0547">Nucleotide-binding</keyword>